<reference key="1">
    <citation type="journal article" date="2000" name="Plant Species Biol.">
        <title>Molecular systematics of Lilium and allied genera (Liliaceae): phylogenetic relationships among Lilium and related genera based on the rbcL and matK gene sequence data.</title>
        <authorList>
            <person name="Hayashi K."/>
            <person name="Kawano S."/>
        </authorList>
        <dbReference type="AGRICOLA" id="IND23250741"/>
    </citation>
    <scope>NUCLEOTIDE SEQUENCE [MRNA]</scope>
</reference>
<sequence length="512" mass="61073">MEELQGYLKKDRSPQQHFLYPLLLQEYIYTLAHDDSLNGSIFYEPIEFIGYDNKFSLVLVKRLIIRMYQQNFLIYLVNDSNQNRFGGHTNYFYSHFFYSQMVSKGFSVIVEIPFSRRLVSSSEEKEIPKSQNLGSIHSIFPFLEDKLSHLNNVSDILIPHPIHFEILVQILQCWIQDVPSLHLLRFFLHKYQNLNKTIQSNKTIYVFSKENKRLFWFLYNSYVSECEFLLVFFHKQSCYLRSTSSGAFLERSHFYGKMEHIIIVCCNNFHKTLWPIKDPLIHYVRYQGKAILASRGNHLLMKEWRYYFVNFWQYYFHFWSQPYRMHINSLLNYSFYFMGYLLRVLINPYAVKNQMLENSFLIDTVIKKFDTIIPIIPLIGSLSKAKFCTFSGHPISKPIWADLSDFDIIDRFGRICRNLSHYYSGSSKKQSLYRIKYILRLSCARTLARKHKSTARALLQRLGLGFLEEFFTEEEQVLSFIFPKTTLFTLHGSHRERIWSLDIIRINDLVNN</sequence>
<dbReference type="EMBL" id="AB030874">
    <property type="protein sequence ID" value="BAB08144.1"/>
    <property type="molecule type" value="mRNA"/>
</dbReference>
<dbReference type="GO" id="GO:0009507">
    <property type="term" value="C:chloroplast"/>
    <property type="evidence" value="ECO:0007669"/>
    <property type="project" value="UniProtKB-SubCell"/>
</dbReference>
<dbReference type="GO" id="GO:0003723">
    <property type="term" value="F:RNA binding"/>
    <property type="evidence" value="ECO:0007669"/>
    <property type="project" value="UniProtKB-KW"/>
</dbReference>
<dbReference type="GO" id="GO:0006397">
    <property type="term" value="P:mRNA processing"/>
    <property type="evidence" value="ECO:0007669"/>
    <property type="project" value="UniProtKB-KW"/>
</dbReference>
<dbReference type="GO" id="GO:0008380">
    <property type="term" value="P:RNA splicing"/>
    <property type="evidence" value="ECO:0007669"/>
    <property type="project" value="UniProtKB-UniRule"/>
</dbReference>
<dbReference type="GO" id="GO:0008033">
    <property type="term" value="P:tRNA processing"/>
    <property type="evidence" value="ECO:0007669"/>
    <property type="project" value="UniProtKB-KW"/>
</dbReference>
<dbReference type="HAMAP" id="MF_01390">
    <property type="entry name" value="MatK"/>
    <property type="match status" value="1"/>
</dbReference>
<dbReference type="InterPro" id="IPR024937">
    <property type="entry name" value="Domain_X"/>
</dbReference>
<dbReference type="InterPro" id="IPR002866">
    <property type="entry name" value="Maturase_MatK"/>
</dbReference>
<dbReference type="InterPro" id="IPR024942">
    <property type="entry name" value="Maturase_MatK_N"/>
</dbReference>
<dbReference type="PANTHER" id="PTHR34811">
    <property type="entry name" value="MATURASE K"/>
    <property type="match status" value="1"/>
</dbReference>
<dbReference type="PANTHER" id="PTHR34811:SF1">
    <property type="entry name" value="MATURASE K"/>
    <property type="match status" value="1"/>
</dbReference>
<dbReference type="Pfam" id="PF01348">
    <property type="entry name" value="Intron_maturas2"/>
    <property type="match status" value="1"/>
</dbReference>
<dbReference type="Pfam" id="PF01824">
    <property type="entry name" value="MatK_N"/>
    <property type="match status" value="1"/>
</dbReference>
<feature type="chain" id="PRO_0000143480" description="Maturase K">
    <location>
        <begin position="1"/>
        <end position="512"/>
    </location>
</feature>
<name>MATK_LILTS</name>
<comment type="function">
    <text evidence="1">Usually encoded in the trnK tRNA gene intron. Probably assists in splicing its own and other chloroplast group II introns.</text>
</comment>
<comment type="subcellular location">
    <subcellularLocation>
        <location>Plastid</location>
        <location>Chloroplast</location>
    </subcellularLocation>
</comment>
<comment type="similarity">
    <text evidence="1">Belongs to the intron maturase 2 family. MatK subfamily.</text>
</comment>
<keyword id="KW-0150">Chloroplast</keyword>
<keyword id="KW-0507">mRNA processing</keyword>
<keyword id="KW-0934">Plastid</keyword>
<keyword id="KW-0694">RNA-binding</keyword>
<keyword id="KW-0819">tRNA processing</keyword>
<protein>
    <recommendedName>
        <fullName evidence="1">Maturase K</fullName>
    </recommendedName>
    <alternativeName>
        <fullName evidence="1">Intron maturase</fullName>
    </alternativeName>
</protein>
<evidence type="ECO:0000255" key="1">
    <source>
        <dbReference type="HAMAP-Rule" id="MF_01390"/>
    </source>
</evidence>
<accession>Q9GIG3</accession>
<geneLocation type="chloroplast"/>
<organism>
    <name type="scientific">Lilium tsingtauense</name>
    <name type="common">Twilight lily</name>
    <name type="synonym">Lilium miquelianum</name>
    <dbReference type="NCBI Taxonomy" id="82331"/>
    <lineage>
        <taxon>Eukaryota</taxon>
        <taxon>Viridiplantae</taxon>
        <taxon>Streptophyta</taxon>
        <taxon>Embryophyta</taxon>
        <taxon>Tracheophyta</taxon>
        <taxon>Spermatophyta</taxon>
        <taxon>Magnoliopsida</taxon>
        <taxon>Liliopsida</taxon>
        <taxon>Liliales</taxon>
        <taxon>Liliaceae</taxon>
        <taxon>Lilium</taxon>
    </lineage>
</organism>
<gene>
    <name evidence="1" type="primary">matK</name>
</gene>
<proteinExistence type="evidence at transcript level"/>